<evidence type="ECO:0000255" key="1">
    <source>
        <dbReference type="HAMAP-Rule" id="MF_01845"/>
    </source>
</evidence>
<protein>
    <recommendedName>
        <fullName evidence="1">UPF0597 protein AHA_1619</fullName>
    </recommendedName>
</protein>
<sequence>MKQAWQQYLQIIQQVVKPALGCTEPIAAAYAAAVAARQLGCKPVRLEVVVSDNLYKNSMGVYVPGTGKIGLAIAAAAGAIGGNAEAGLEVLAAITPAQVAEAQELIDAGQVQVSRTSAPEFIYCRVRLLGLDAEGTEHSAEVTLCGGHTRIVEQRCNDEVTFTAEQGQGGATGAICDGVDISIAAIHEFATQVEFEQIRFILQASELNGKLSDEGMNNPYGLEIGRTMQQNIQAGLIGEDVMNRIVMRTAAASDARMGGASLPAMSNFGSGNQGIAATIPVVVIAERFGASEEQLARALIMSHLGAIYIKSHYPPLSAFCGNTVTSAAAAMAMVYLAGGSFEQSCHAIQNVLSDSAGMVCDGAKASCAMKVSTSSGAAVRGFLMALNSHGVSGQGIVAGNVEQTIRNVGQMVKDGMSATDSTIIDIMSA</sequence>
<gene>
    <name type="ordered locus">AHA_1619</name>
</gene>
<feature type="chain" id="PRO_0000339781" description="UPF0597 protein AHA_1619">
    <location>
        <begin position="1"/>
        <end position="429"/>
    </location>
</feature>
<dbReference type="EMBL" id="CP000462">
    <property type="protein sequence ID" value="ABK37907.1"/>
    <property type="molecule type" value="Genomic_DNA"/>
</dbReference>
<dbReference type="RefSeq" id="WP_011705514.1">
    <property type="nucleotide sequence ID" value="NC_008570.1"/>
</dbReference>
<dbReference type="RefSeq" id="YP_856155.1">
    <property type="nucleotide sequence ID" value="NC_008570.1"/>
</dbReference>
<dbReference type="SMR" id="A0KIQ4"/>
<dbReference type="STRING" id="380703.AHA_1619"/>
<dbReference type="EnsemblBacteria" id="ABK37907">
    <property type="protein sequence ID" value="ABK37907"/>
    <property type="gene ID" value="AHA_1619"/>
</dbReference>
<dbReference type="GeneID" id="4489164"/>
<dbReference type="KEGG" id="aha:AHA_1619"/>
<dbReference type="PATRIC" id="fig|380703.7.peg.1632"/>
<dbReference type="eggNOG" id="COG3681">
    <property type="taxonomic scope" value="Bacteria"/>
</dbReference>
<dbReference type="HOGENOM" id="CLU_051840_0_0_6"/>
<dbReference type="OrthoDB" id="41906at2"/>
<dbReference type="Proteomes" id="UP000000756">
    <property type="component" value="Chromosome"/>
</dbReference>
<dbReference type="GO" id="GO:0080146">
    <property type="term" value="F:L-cysteine desulfhydrase activity"/>
    <property type="evidence" value="ECO:0007669"/>
    <property type="project" value="TreeGrafter"/>
</dbReference>
<dbReference type="GO" id="GO:0019450">
    <property type="term" value="P:L-cysteine catabolic process to pyruvate"/>
    <property type="evidence" value="ECO:0007669"/>
    <property type="project" value="TreeGrafter"/>
</dbReference>
<dbReference type="HAMAP" id="MF_01845">
    <property type="entry name" value="UPF0597"/>
    <property type="match status" value="1"/>
</dbReference>
<dbReference type="InterPro" id="IPR005130">
    <property type="entry name" value="Ser_deHydtase-like_asu"/>
</dbReference>
<dbReference type="InterPro" id="IPR021144">
    <property type="entry name" value="UPF0597"/>
</dbReference>
<dbReference type="PANTHER" id="PTHR30501">
    <property type="entry name" value="UPF0597 PROTEIN YHAM"/>
    <property type="match status" value="1"/>
</dbReference>
<dbReference type="PANTHER" id="PTHR30501:SF2">
    <property type="entry name" value="UPF0597 PROTEIN YHAM"/>
    <property type="match status" value="1"/>
</dbReference>
<dbReference type="Pfam" id="PF03313">
    <property type="entry name" value="SDH_alpha"/>
    <property type="match status" value="1"/>
</dbReference>
<dbReference type="PIRSF" id="PIRSF006054">
    <property type="entry name" value="UCP006054"/>
    <property type="match status" value="1"/>
</dbReference>
<name>Y1619_AERHH</name>
<keyword id="KW-1185">Reference proteome</keyword>
<accession>A0KIQ4</accession>
<comment type="similarity">
    <text evidence="1">Belongs to the UPF0597 family.</text>
</comment>
<reference key="1">
    <citation type="journal article" date="2006" name="J. Bacteriol.">
        <title>Genome sequence of Aeromonas hydrophila ATCC 7966T: jack of all trades.</title>
        <authorList>
            <person name="Seshadri R."/>
            <person name="Joseph S.W."/>
            <person name="Chopra A.K."/>
            <person name="Sha J."/>
            <person name="Shaw J."/>
            <person name="Graf J."/>
            <person name="Haft D.H."/>
            <person name="Wu M."/>
            <person name="Ren Q."/>
            <person name="Rosovitz M.J."/>
            <person name="Madupu R."/>
            <person name="Tallon L."/>
            <person name="Kim M."/>
            <person name="Jin S."/>
            <person name="Vuong H."/>
            <person name="Stine O.C."/>
            <person name="Ali A."/>
            <person name="Horneman A.J."/>
            <person name="Heidelberg J.F."/>
        </authorList>
    </citation>
    <scope>NUCLEOTIDE SEQUENCE [LARGE SCALE GENOMIC DNA]</scope>
    <source>
        <strain>ATCC 7966 / DSM 30187 / BCRC 13018 / CCUG 14551 / JCM 1027 / KCTC 2358 / NCIMB 9240 / NCTC 8049</strain>
    </source>
</reference>
<organism>
    <name type="scientific">Aeromonas hydrophila subsp. hydrophila (strain ATCC 7966 / DSM 30187 / BCRC 13018 / CCUG 14551 / JCM 1027 / KCTC 2358 / NCIMB 9240 / NCTC 8049)</name>
    <dbReference type="NCBI Taxonomy" id="380703"/>
    <lineage>
        <taxon>Bacteria</taxon>
        <taxon>Pseudomonadati</taxon>
        <taxon>Pseudomonadota</taxon>
        <taxon>Gammaproteobacteria</taxon>
        <taxon>Aeromonadales</taxon>
        <taxon>Aeromonadaceae</taxon>
        <taxon>Aeromonas</taxon>
    </lineage>
</organism>
<proteinExistence type="inferred from homology"/>